<proteinExistence type="evidence at protein level"/>
<dbReference type="EC" id="2.7.7.6" evidence="2"/>
<dbReference type="EMBL" id="AE006641">
    <property type="protein sequence ID" value="AAK40725.1"/>
    <property type="molecule type" value="Genomic_DNA"/>
</dbReference>
<dbReference type="PIR" id="F90183">
    <property type="entry name" value="F90183"/>
</dbReference>
<dbReference type="RefSeq" id="WP_009988796.1">
    <property type="nucleotide sequence ID" value="NC_002754.1"/>
</dbReference>
<dbReference type="PDB" id="3HKZ">
    <property type="method" value="X-ray"/>
    <property type="resolution" value="3.40 A"/>
    <property type="chains" value="Y/Z=1-104"/>
</dbReference>
<dbReference type="PDBsum" id="3HKZ"/>
<dbReference type="SMR" id="Q980B8"/>
<dbReference type="STRING" id="273057.SSO0396"/>
<dbReference type="PaxDb" id="273057-SSO0396"/>
<dbReference type="EnsemblBacteria" id="AAK40725">
    <property type="protein sequence ID" value="AAK40725"/>
    <property type="gene ID" value="SSO0396"/>
</dbReference>
<dbReference type="KEGG" id="sso:SSO0396"/>
<dbReference type="PATRIC" id="fig|273057.12.peg.392"/>
<dbReference type="eggNOG" id="arCOG05938">
    <property type="taxonomic scope" value="Archaea"/>
</dbReference>
<dbReference type="HOGENOM" id="CLU_177471_0_0_2"/>
<dbReference type="InParanoid" id="Q980B8"/>
<dbReference type="BRENDA" id="2.7.7.6">
    <property type="organism ID" value="6163"/>
</dbReference>
<dbReference type="EvolutionaryTrace" id="Q980B8"/>
<dbReference type="Proteomes" id="UP000001974">
    <property type="component" value="Chromosome"/>
</dbReference>
<dbReference type="GO" id="GO:0005737">
    <property type="term" value="C:cytoplasm"/>
    <property type="evidence" value="ECO:0007669"/>
    <property type="project" value="UniProtKB-SubCell"/>
</dbReference>
<dbReference type="GO" id="GO:0000428">
    <property type="term" value="C:DNA-directed RNA polymerase complex"/>
    <property type="evidence" value="ECO:0007669"/>
    <property type="project" value="UniProtKB-KW"/>
</dbReference>
<dbReference type="GO" id="GO:0003677">
    <property type="term" value="F:DNA binding"/>
    <property type="evidence" value="ECO:0007669"/>
    <property type="project" value="UniProtKB-KW"/>
</dbReference>
<dbReference type="GO" id="GO:0016779">
    <property type="term" value="F:nucleotidyltransferase activity"/>
    <property type="evidence" value="ECO:0007669"/>
    <property type="project" value="UniProtKB-KW"/>
</dbReference>
<dbReference type="Gene3D" id="6.20.450.10">
    <property type="match status" value="1"/>
</dbReference>
<dbReference type="InterPro" id="IPR021985">
    <property type="entry name" value="RNA_pol_Rpo13"/>
</dbReference>
<dbReference type="Pfam" id="PF12136">
    <property type="entry name" value="RNA_pol_Rpo13"/>
    <property type="match status" value="1"/>
</dbReference>
<organism>
    <name type="scientific">Saccharolobus solfataricus (strain ATCC 35092 / DSM 1617 / JCM 11322 / P2)</name>
    <name type="common">Sulfolobus solfataricus</name>
    <dbReference type="NCBI Taxonomy" id="273057"/>
    <lineage>
        <taxon>Archaea</taxon>
        <taxon>Thermoproteota</taxon>
        <taxon>Thermoprotei</taxon>
        <taxon>Sulfolobales</taxon>
        <taxon>Sulfolobaceae</taxon>
        <taxon>Saccharolobus</taxon>
    </lineage>
</organism>
<feature type="chain" id="PRO_0000453789" description="DNA-directed RNA polymerase subunit Rpo13">
    <location>
        <begin position="1"/>
        <end position="104"/>
    </location>
</feature>
<feature type="region of interest" description="Disordered" evidence="3">
    <location>
        <begin position="1"/>
        <end position="33"/>
    </location>
</feature>
<feature type="region of interest" description="Disordered" evidence="3">
    <location>
        <begin position="78"/>
        <end position="104"/>
    </location>
</feature>
<feature type="compositionally biased region" description="Acidic residues" evidence="3">
    <location>
        <begin position="7"/>
        <end position="31"/>
    </location>
</feature>
<feature type="compositionally biased region" description="Basic residues" evidence="3">
    <location>
        <begin position="80"/>
        <end position="104"/>
    </location>
</feature>
<feature type="helix" evidence="7">
    <location>
        <begin position="43"/>
        <end position="53"/>
    </location>
</feature>
<feature type="helix" evidence="7">
    <location>
        <begin position="60"/>
        <end position="72"/>
    </location>
</feature>
<feature type="turn" evidence="7">
    <location>
        <begin position="73"/>
        <end position="76"/>
    </location>
</feature>
<gene>
    <name evidence="5" type="primary">rpo13</name>
    <name type="ordered locus">SSO0396</name>
</gene>
<sequence>MVSGMSTDEEKEGTSDEEVNEEKEVEETSEDEFPKLSIQDIELLMRNTEIWDNLLNGKITLEEAKKLFEDNYKEYEKRDSRRKAKKAVSKKVKKTKKKEKSVEG</sequence>
<keyword id="KW-0002">3D-structure</keyword>
<keyword id="KW-0963">Cytoplasm</keyword>
<keyword id="KW-0238">DNA-binding</keyword>
<keyword id="KW-0240">DNA-directed RNA polymerase</keyword>
<keyword id="KW-0548">Nucleotidyltransferase</keyword>
<keyword id="KW-1185">Reference proteome</keyword>
<keyword id="KW-0804">Transcription</keyword>
<keyword id="KW-0808">Transferase</keyword>
<name>RPO13_SACS2</name>
<reference key="1">
    <citation type="journal article" date="2001" name="Proc. Natl. Acad. Sci. U.S.A.">
        <title>The complete genome of the crenarchaeon Sulfolobus solfataricus P2.</title>
        <authorList>
            <person name="She Q."/>
            <person name="Singh R.K."/>
            <person name="Confalonieri F."/>
            <person name="Zivanovic Y."/>
            <person name="Allard G."/>
            <person name="Awayez M.J."/>
            <person name="Chan-Weiher C.C.-Y."/>
            <person name="Clausen I.G."/>
            <person name="Curtis B.A."/>
            <person name="De Moors A."/>
            <person name="Erauso G."/>
            <person name="Fletcher C."/>
            <person name="Gordon P.M.K."/>
            <person name="Heikamp-de Jong I."/>
            <person name="Jeffries A.C."/>
            <person name="Kozera C.J."/>
            <person name="Medina N."/>
            <person name="Peng X."/>
            <person name="Thi-Ngoc H.P."/>
            <person name="Redder P."/>
            <person name="Schenk M.E."/>
            <person name="Theriault C."/>
            <person name="Tolstrup N."/>
            <person name="Charlebois R.L."/>
            <person name="Doolittle W.F."/>
            <person name="Duguet M."/>
            <person name="Gaasterland T."/>
            <person name="Garrett R.A."/>
            <person name="Ragan M.A."/>
            <person name="Sensen C.W."/>
            <person name="Van der Oost J."/>
        </authorList>
    </citation>
    <scope>NUCLEOTIDE SEQUENCE [LARGE SCALE GENOMIC DNA]</scope>
    <source>
        <strain>ATCC 35092 / DSM 1617 / JCM 11322 / P2</strain>
    </source>
</reference>
<reference evidence="6" key="2">
    <citation type="journal article" date="2008" name="Nature">
        <title>The X-ray crystal structure of RNA polymerase from Archaea.</title>
        <authorList>
            <person name="Hirata A."/>
            <person name="Klein B.J."/>
            <person name="Murakami K.S."/>
        </authorList>
    </citation>
    <scope>X-RAY CRYSTALLOGRAPHY (3.40 ANGSTROMS) OF THE RNA POLYMERASE COMPLEX</scope>
    <scope>SUBUNIT</scope>
    <source>
        <strain>ATCC 35092 / DSM 1617 / JCM 11322 / P2</strain>
    </source>
</reference>
<evidence type="ECO:0000250" key="1">
    <source>
        <dbReference type="UniProtKB" id="B8YB65"/>
    </source>
</evidence>
<evidence type="ECO:0000250" key="2">
    <source>
        <dbReference type="UniProtKB" id="Q4JAJ6"/>
    </source>
</evidence>
<evidence type="ECO:0000256" key="3">
    <source>
        <dbReference type="SAM" id="MobiDB-lite"/>
    </source>
</evidence>
<evidence type="ECO:0000269" key="4">
    <source>
    </source>
</evidence>
<evidence type="ECO:0000305" key="5"/>
<evidence type="ECO:0007744" key="6">
    <source>
        <dbReference type="PDB" id="3HKZ"/>
    </source>
</evidence>
<evidence type="ECO:0007829" key="7">
    <source>
        <dbReference type="PDB" id="3HKZ"/>
    </source>
</evidence>
<comment type="function">
    <text evidence="2">DNA-dependent RNA polymerase (RNAP) catalyzes the transcription of DNA into RNA using the four ribonucleoside triphosphates as substrates. Probably binds dsDNA.</text>
</comment>
<comment type="catalytic activity">
    <reaction evidence="2">
        <text>RNA(n) + a ribonucleoside 5'-triphosphate = RNA(n+1) + diphosphate</text>
        <dbReference type="Rhea" id="RHEA:21248"/>
        <dbReference type="Rhea" id="RHEA-COMP:14527"/>
        <dbReference type="Rhea" id="RHEA-COMP:17342"/>
        <dbReference type="ChEBI" id="CHEBI:33019"/>
        <dbReference type="ChEBI" id="CHEBI:61557"/>
        <dbReference type="ChEBI" id="CHEBI:140395"/>
        <dbReference type="EC" id="2.7.7.6"/>
    </reaction>
</comment>
<comment type="subunit">
    <text evidence="4 6">Part of the 13-subunit RNA polymerase complex.</text>
</comment>
<comment type="subcellular location">
    <subcellularLocation>
        <location evidence="1">Cytoplasm</location>
    </subcellularLocation>
</comment>
<comment type="similarity">
    <text evidence="5">Belongs to the archaeal Rpo13 RNA polymerase subunit family.</text>
</comment>
<protein>
    <recommendedName>
        <fullName evidence="5">DNA-directed RNA polymerase subunit Rpo13</fullName>
        <ecNumber evidence="2">2.7.7.6</ecNumber>
    </recommendedName>
</protein>
<accession>Q980B8</accession>